<accession>Q1ICW8</accession>
<dbReference type="EC" id="6.1.1.17" evidence="1"/>
<dbReference type="EMBL" id="CT573326">
    <property type="protein sequence ID" value="CAK14495.1"/>
    <property type="molecule type" value="Genomic_DNA"/>
</dbReference>
<dbReference type="RefSeq" id="WP_011532905.1">
    <property type="nucleotide sequence ID" value="NC_008027.1"/>
</dbReference>
<dbReference type="SMR" id="Q1ICW8"/>
<dbReference type="STRING" id="384676.PSEEN1639"/>
<dbReference type="GeneID" id="32804880"/>
<dbReference type="KEGG" id="pen:PSEEN1639"/>
<dbReference type="eggNOG" id="COG0008">
    <property type="taxonomic scope" value="Bacteria"/>
</dbReference>
<dbReference type="HOGENOM" id="CLU_015768_6_3_6"/>
<dbReference type="OrthoDB" id="9807503at2"/>
<dbReference type="Proteomes" id="UP000000658">
    <property type="component" value="Chromosome"/>
</dbReference>
<dbReference type="GO" id="GO:0005829">
    <property type="term" value="C:cytosol"/>
    <property type="evidence" value="ECO:0007669"/>
    <property type="project" value="TreeGrafter"/>
</dbReference>
<dbReference type="GO" id="GO:0005524">
    <property type="term" value="F:ATP binding"/>
    <property type="evidence" value="ECO:0007669"/>
    <property type="project" value="UniProtKB-UniRule"/>
</dbReference>
<dbReference type="GO" id="GO:0004818">
    <property type="term" value="F:glutamate-tRNA ligase activity"/>
    <property type="evidence" value="ECO:0007669"/>
    <property type="project" value="UniProtKB-UniRule"/>
</dbReference>
<dbReference type="GO" id="GO:0000049">
    <property type="term" value="F:tRNA binding"/>
    <property type="evidence" value="ECO:0007669"/>
    <property type="project" value="InterPro"/>
</dbReference>
<dbReference type="GO" id="GO:0008270">
    <property type="term" value="F:zinc ion binding"/>
    <property type="evidence" value="ECO:0007669"/>
    <property type="project" value="InterPro"/>
</dbReference>
<dbReference type="GO" id="GO:0006424">
    <property type="term" value="P:glutamyl-tRNA aminoacylation"/>
    <property type="evidence" value="ECO:0007669"/>
    <property type="project" value="UniProtKB-UniRule"/>
</dbReference>
<dbReference type="CDD" id="cd00808">
    <property type="entry name" value="GluRS_core"/>
    <property type="match status" value="1"/>
</dbReference>
<dbReference type="FunFam" id="1.10.10.350:FF:000007">
    <property type="entry name" value="Glutamate--tRNA ligase"/>
    <property type="match status" value="1"/>
</dbReference>
<dbReference type="FunFam" id="3.40.50.620:FF:000045">
    <property type="entry name" value="Glutamate--tRNA ligase, mitochondrial"/>
    <property type="match status" value="1"/>
</dbReference>
<dbReference type="Gene3D" id="1.10.10.350">
    <property type="match status" value="1"/>
</dbReference>
<dbReference type="Gene3D" id="3.40.50.620">
    <property type="entry name" value="HUPs"/>
    <property type="match status" value="1"/>
</dbReference>
<dbReference type="HAMAP" id="MF_00022">
    <property type="entry name" value="Glu_tRNA_synth_type1"/>
    <property type="match status" value="1"/>
</dbReference>
<dbReference type="InterPro" id="IPR045462">
    <property type="entry name" value="aa-tRNA-synth_I_cd-bd"/>
</dbReference>
<dbReference type="InterPro" id="IPR020751">
    <property type="entry name" value="aa-tRNA-synth_I_codon-bd_sub2"/>
</dbReference>
<dbReference type="InterPro" id="IPR001412">
    <property type="entry name" value="aa-tRNA-synth_I_CS"/>
</dbReference>
<dbReference type="InterPro" id="IPR008925">
    <property type="entry name" value="aa_tRNA-synth_I_cd-bd_sf"/>
</dbReference>
<dbReference type="InterPro" id="IPR004527">
    <property type="entry name" value="Glu-tRNA-ligase_bac/mito"/>
</dbReference>
<dbReference type="InterPro" id="IPR000924">
    <property type="entry name" value="Glu/Gln-tRNA-synth"/>
</dbReference>
<dbReference type="InterPro" id="IPR020058">
    <property type="entry name" value="Glu/Gln-tRNA-synth_Ib_cat-dom"/>
</dbReference>
<dbReference type="InterPro" id="IPR049940">
    <property type="entry name" value="GluQ/Sye"/>
</dbReference>
<dbReference type="InterPro" id="IPR033910">
    <property type="entry name" value="GluRS_core"/>
</dbReference>
<dbReference type="InterPro" id="IPR014729">
    <property type="entry name" value="Rossmann-like_a/b/a_fold"/>
</dbReference>
<dbReference type="NCBIfam" id="TIGR00464">
    <property type="entry name" value="gltX_bact"/>
    <property type="match status" value="1"/>
</dbReference>
<dbReference type="PANTHER" id="PTHR43311">
    <property type="entry name" value="GLUTAMATE--TRNA LIGASE"/>
    <property type="match status" value="1"/>
</dbReference>
<dbReference type="PANTHER" id="PTHR43311:SF2">
    <property type="entry name" value="GLUTAMATE--TRNA LIGASE, MITOCHONDRIAL-RELATED"/>
    <property type="match status" value="1"/>
</dbReference>
<dbReference type="Pfam" id="PF19269">
    <property type="entry name" value="Anticodon_2"/>
    <property type="match status" value="1"/>
</dbReference>
<dbReference type="Pfam" id="PF00749">
    <property type="entry name" value="tRNA-synt_1c"/>
    <property type="match status" value="1"/>
</dbReference>
<dbReference type="PRINTS" id="PR00987">
    <property type="entry name" value="TRNASYNTHGLU"/>
</dbReference>
<dbReference type="SUPFAM" id="SSF48163">
    <property type="entry name" value="An anticodon-binding domain of class I aminoacyl-tRNA synthetases"/>
    <property type="match status" value="1"/>
</dbReference>
<dbReference type="SUPFAM" id="SSF52374">
    <property type="entry name" value="Nucleotidylyl transferase"/>
    <property type="match status" value="1"/>
</dbReference>
<dbReference type="PROSITE" id="PS00178">
    <property type="entry name" value="AA_TRNA_LIGASE_I"/>
    <property type="match status" value="1"/>
</dbReference>
<keyword id="KW-0030">Aminoacyl-tRNA synthetase</keyword>
<keyword id="KW-0067">ATP-binding</keyword>
<keyword id="KW-0963">Cytoplasm</keyword>
<keyword id="KW-0436">Ligase</keyword>
<keyword id="KW-0547">Nucleotide-binding</keyword>
<keyword id="KW-0648">Protein biosynthesis</keyword>
<evidence type="ECO:0000255" key="1">
    <source>
        <dbReference type="HAMAP-Rule" id="MF_00022"/>
    </source>
</evidence>
<organism>
    <name type="scientific">Pseudomonas entomophila (strain L48)</name>
    <dbReference type="NCBI Taxonomy" id="384676"/>
    <lineage>
        <taxon>Bacteria</taxon>
        <taxon>Pseudomonadati</taxon>
        <taxon>Pseudomonadota</taxon>
        <taxon>Gammaproteobacteria</taxon>
        <taxon>Pseudomonadales</taxon>
        <taxon>Pseudomonadaceae</taxon>
        <taxon>Pseudomonas</taxon>
    </lineage>
</organism>
<protein>
    <recommendedName>
        <fullName evidence="1">Glutamate--tRNA ligase</fullName>
        <ecNumber evidence="1">6.1.1.17</ecNumber>
    </recommendedName>
    <alternativeName>
        <fullName evidence="1">Glutamyl-tRNA synthetase</fullName>
        <shortName evidence="1">GluRS</shortName>
    </alternativeName>
</protein>
<sequence>MTTVRTRIAPSPTGDPHVGTAYIALFNYCFAKQHGGEFILRIEDTDQLRSTRESEQQIFDALRWLGIEWNEGPDVGGSHGPYRQSERGEIYAKYAKELVDAGHAFYCFCTAEELEQMRAEQMARGETPRYDGRALLLSDEEVQRRLAAGEPHVIRMKVPSEGICVVPDMLRGDVEIPWDRMDMQVLMKNDGLPTYFLANVVDDHLMGITHVLRGEEWLPSAPKLIKLYEYFGWEQPKLCYMPLLRNPDKSKLSKRKNPTSVTFYERMGFMPEAMLNYLGRMGWSMPDEREKFSLAEMVEHFDLSRISLGGPIFDIEKLSWLNGQWLRELPVEEFAARVQKWAFNSDYMMKIAPHVQGRVETFSQVAPLGGFFFEGALKLDAKLFESKKLSADQVRQVMQLILWKLESLRQWEKDRITGCIQAVVESLELKLRDAMPLMFAAITGQASSVSVLDAMEILGPDLTRYRLRQAIDLLGGVSKKENKEWEKLLASIA</sequence>
<name>SYE_PSEE4</name>
<proteinExistence type="inferred from homology"/>
<feature type="chain" id="PRO_1000001939" description="Glutamate--tRNA ligase">
    <location>
        <begin position="1"/>
        <end position="493"/>
    </location>
</feature>
<feature type="short sequence motif" description="'HIGH' region" evidence="1">
    <location>
        <begin position="10"/>
        <end position="20"/>
    </location>
</feature>
<feature type="short sequence motif" description="'KMSKS' region" evidence="1">
    <location>
        <begin position="251"/>
        <end position="255"/>
    </location>
</feature>
<feature type="binding site" evidence="1">
    <location>
        <position position="254"/>
    </location>
    <ligand>
        <name>ATP</name>
        <dbReference type="ChEBI" id="CHEBI:30616"/>
    </ligand>
</feature>
<gene>
    <name evidence="1" type="primary">gltX</name>
    <name type="ordered locus">PSEEN1639</name>
</gene>
<reference key="1">
    <citation type="journal article" date="2006" name="Nat. Biotechnol.">
        <title>Complete genome sequence of the entomopathogenic and metabolically versatile soil bacterium Pseudomonas entomophila.</title>
        <authorList>
            <person name="Vodovar N."/>
            <person name="Vallenet D."/>
            <person name="Cruveiller S."/>
            <person name="Rouy Z."/>
            <person name="Barbe V."/>
            <person name="Acosta C."/>
            <person name="Cattolico L."/>
            <person name="Jubin C."/>
            <person name="Lajus A."/>
            <person name="Segurens B."/>
            <person name="Vacherie B."/>
            <person name="Wincker P."/>
            <person name="Weissenbach J."/>
            <person name="Lemaitre B."/>
            <person name="Medigue C."/>
            <person name="Boccard F."/>
        </authorList>
    </citation>
    <scope>NUCLEOTIDE SEQUENCE [LARGE SCALE GENOMIC DNA]</scope>
    <source>
        <strain>L48</strain>
    </source>
</reference>
<comment type="function">
    <text evidence="1">Catalyzes the attachment of glutamate to tRNA(Glu) in a two-step reaction: glutamate is first activated by ATP to form Glu-AMP and then transferred to the acceptor end of tRNA(Glu).</text>
</comment>
<comment type="catalytic activity">
    <reaction evidence="1">
        <text>tRNA(Glu) + L-glutamate + ATP = L-glutamyl-tRNA(Glu) + AMP + diphosphate</text>
        <dbReference type="Rhea" id="RHEA:23540"/>
        <dbReference type="Rhea" id="RHEA-COMP:9663"/>
        <dbReference type="Rhea" id="RHEA-COMP:9680"/>
        <dbReference type="ChEBI" id="CHEBI:29985"/>
        <dbReference type="ChEBI" id="CHEBI:30616"/>
        <dbReference type="ChEBI" id="CHEBI:33019"/>
        <dbReference type="ChEBI" id="CHEBI:78442"/>
        <dbReference type="ChEBI" id="CHEBI:78520"/>
        <dbReference type="ChEBI" id="CHEBI:456215"/>
        <dbReference type="EC" id="6.1.1.17"/>
    </reaction>
</comment>
<comment type="subunit">
    <text evidence="1">Monomer.</text>
</comment>
<comment type="subcellular location">
    <subcellularLocation>
        <location evidence="1">Cytoplasm</location>
    </subcellularLocation>
</comment>
<comment type="similarity">
    <text evidence="1">Belongs to the class-I aminoacyl-tRNA synthetase family. Glutamate--tRNA ligase type 1 subfamily.</text>
</comment>